<proteinExistence type="inferred from homology"/>
<sequence>MSSAIELKKQIVAEIAEKFRASKSTVIVDYRGLNVAEVTELRKRLREAGVEFKVYKNTLTRRALAEVGLEGLNDVFTGPNAIAFSKEDVVAPAKILSEFAKDHEALEIKAGVIEGNIATLEEINALAKLPSREGLLSMLLSVLQAPIRNFALVAKAVADKKEEQSA</sequence>
<organism>
    <name type="scientific">Geobacillus sp. (strain WCH70)</name>
    <dbReference type="NCBI Taxonomy" id="471223"/>
    <lineage>
        <taxon>Bacteria</taxon>
        <taxon>Bacillati</taxon>
        <taxon>Bacillota</taxon>
        <taxon>Bacilli</taxon>
        <taxon>Bacillales</taxon>
        <taxon>Anoxybacillaceae</taxon>
        <taxon>Geobacillus</taxon>
    </lineage>
</organism>
<keyword id="KW-0687">Ribonucleoprotein</keyword>
<keyword id="KW-0689">Ribosomal protein</keyword>
<keyword id="KW-0694">RNA-binding</keyword>
<keyword id="KW-0699">rRNA-binding</keyword>
<gene>
    <name evidence="1" type="primary">rplJ</name>
    <name type="ordered locus">GWCH70_0100</name>
</gene>
<evidence type="ECO:0000255" key="1">
    <source>
        <dbReference type="HAMAP-Rule" id="MF_00362"/>
    </source>
</evidence>
<evidence type="ECO:0000305" key="2"/>
<name>RL10_GEOSW</name>
<accession>C5D3Q6</accession>
<reference key="1">
    <citation type="submission" date="2009-06" db="EMBL/GenBank/DDBJ databases">
        <title>Complete sequence of chromosome of Geopacillus sp. WCH70.</title>
        <authorList>
            <consortium name="US DOE Joint Genome Institute"/>
            <person name="Lucas S."/>
            <person name="Copeland A."/>
            <person name="Lapidus A."/>
            <person name="Glavina del Rio T."/>
            <person name="Dalin E."/>
            <person name="Tice H."/>
            <person name="Bruce D."/>
            <person name="Goodwin L."/>
            <person name="Pitluck S."/>
            <person name="Chertkov O."/>
            <person name="Brettin T."/>
            <person name="Detter J.C."/>
            <person name="Han C."/>
            <person name="Larimer F."/>
            <person name="Land M."/>
            <person name="Hauser L."/>
            <person name="Kyrpides N."/>
            <person name="Mikhailova N."/>
            <person name="Brumm P."/>
            <person name="Mead D.A."/>
            <person name="Richardson P."/>
        </authorList>
    </citation>
    <scope>NUCLEOTIDE SEQUENCE [LARGE SCALE GENOMIC DNA]</scope>
    <source>
        <strain>WCH70</strain>
    </source>
</reference>
<feature type="chain" id="PRO_1000205443" description="Large ribosomal subunit protein uL10">
    <location>
        <begin position="1"/>
        <end position="166"/>
    </location>
</feature>
<dbReference type="EMBL" id="CP001638">
    <property type="protein sequence ID" value="ACS23040.1"/>
    <property type="molecule type" value="Genomic_DNA"/>
</dbReference>
<dbReference type="SMR" id="C5D3Q6"/>
<dbReference type="STRING" id="471223.GWCH70_0100"/>
<dbReference type="KEGG" id="gwc:GWCH70_0100"/>
<dbReference type="eggNOG" id="COG0244">
    <property type="taxonomic scope" value="Bacteria"/>
</dbReference>
<dbReference type="HOGENOM" id="CLU_092227_2_0_9"/>
<dbReference type="OrthoDB" id="9808307at2"/>
<dbReference type="GO" id="GO:0015934">
    <property type="term" value="C:large ribosomal subunit"/>
    <property type="evidence" value="ECO:0007669"/>
    <property type="project" value="InterPro"/>
</dbReference>
<dbReference type="GO" id="GO:0070180">
    <property type="term" value="F:large ribosomal subunit rRNA binding"/>
    <property type="evidence" value="ECO:0007669"/>
    <property type="project" value="UniProtKB-UniRule"/>
</dbReference>
<dbReference type="GO" id="GO:0003735">
    <property type="term" value="F:structural constituent of ribosome"/>
    <property type="evidence" value="ECO:0007669"/>
    <property type="project" value="InterPro"/>
</dbReference>
<dbReference type="GO" id="GO:0006412">
    <property type="term" value="P:translation"/>
    <property type="evidence" value="ECO:0007669"/>
    <property type="project" value="UniProtKB-UniRule"/>
</dbReference>
<dbReference type="CDD" id="cd05797">
    <property type="entry name" value="Ribosomal_L10"/>
    <property type="match status" value="1"/>
</dbReference>
<dbReference type="FunFam" id="3.30.70.1730:FF:000001">
    <property type="entry name" value="50S ribosomal protein L10"/>
    <property type="match status" value="1"/>
</dbReference>
<dbReference type="Gene3D" id="3.30.70.1730">
    <property type="match status" value="1"/>
</dbReference>
<dbReference type="Gene3D" id="6.10.250.290">
    <property type="match status" value="1"/>
</dbReference>
<dbReference type="HAMAP" id="MF_00362">
    <property type="entry name" value="Ribosomal_uL10"/>
    <property type="match status" value="1"/>
</dbReference>
<dbReference type="InterPro" id="IPR001790">
    <property type="entry name" value="Ribosomal_uL10"/>
</dbReference>
<dbReference type="InterPro" id="IPR043141">
    <property type="entry name" value="Ribosomal_uL10-like_sf"/>
</dbReference>
<dbReference type="InterPro" id="IPR022973">
    <property type="entry name" value="Ribosomal_uL10_bac"/>
</dbReference>
<dbReference type="InterPro" id="IPR047865">
    <property type="entry name" value="Ribosomal_uL10_bac_type"/>
</dbReference>
<dbReference type="InterPro" id="IPR002363">
    <property type="entry name" value="Ribosomal_uL10_CS_bac"/>
</dbReference>
<dbReference type="NCBIfam" id="NF000955">
    <property type="entry name" value="PRK00099.1-1"/>
    <property type="match status" value="1"/>
</dbReference>
<dbReference type="PANTHER" id="PTHR11560">
    <property type="entry name" value="39S RIBOSOMAL PROTEIN L10, MITOCHONDRIAL"/>
    <property type="match status" value="1"/>
</dbReference>
<dbReference type="Pfam" id="PF00466">
    <property type="entry name" value="Ribosomal_L10"/>
    <property type="match status" value="1"/>
</dbReference>
<dbReference type="SUPFAM" id="SSF160369">
    <property type="entry name" value="Ribosomal protein L10-like"/>
    <property type="match status" value="1"/>
</dbReference>
<dbReference type="PROSITE" id="PS01109">
    <property type="entry name" value="RIBOSOMAL_L10"/>
    <property type="match status" value="1"/>
</dbReference>
<protein>
    <recommendedName>
        <fullName evidence="1">Large ribosomal subunit protein uL10</fullName>
    </recommendedName>
    <alternativeName>
        <fullName evidence="2">50S ribosomal protein L10</fullName>
    </alternativeName>
</protein>
<comment type="function">
    <text evidence="1">Forms part of the ribosomal stalk, playing a central role in the interaction of the ribosome with GTP-bound translation factors.</text>
</comment>
<comment type="subunit">
    <text evidence="1">Part of the ribosomal stalk of the 50S ribosomal subunit. The N-terminus interacts with L11 and the large rRNA to form the base of the stalk. The C-terminus forms an elongated spine to which L12 dimers bind in a sequential fashion forming a multimeric L10(L12)X complex.</text>
</comment>
<comment type="similarity">
    <text evidence="1">Belongs to the universal ribosomal protein uL10 family.</text>
</comment>